<dbReference type="EMBL" id="CR382131">
    <property type="protein sequence ID" value="CAG79557.1"/>
    <property type="molecule type" value="Genomic_DNA"/>
</dbReference>
<dbReference type="RefSeq" id="XP_503964.1">
    <property type="nucleotide sequence ID" value="XM_503964.1"/>
</dbReference>
<dbReference type="SMR" id="Q6C5U8"/>
<dbReference type="FunCoup" id="Q6C5U8">
    <property type="interactions" value="296"/>
</dbReference>
<dbReference type="STRING" id="284591.Q6C5U8"/>
<dbReference type="EnsemblFungi" id="CAG79557">
    <property type="protein sequence ID" value="CAG79557"/>
    <property type="gene ID" value="YALI0_E15037g"/>
</dbReference>
<dbReference type="KEGG" id="yli:2911542"/>
<dbReference type="VEuPathDB" id="FungiDB:YALI0_E15037g"/>
<dbReference type="HOGENOM" id="CLU_094271_0_1_1"/>
<dbReference type="InParanoid" id="Q6C5U8"/>
<dbReference type="OMA" id="LTTYHDH"/>
<dbReference type="OrthoDB" id="113880at4891"/>
<dbReference type="Proteomes" id="UP000001300">
    <property type="component" value="Chromosome E"/>
</dbReference>
<dbReference type="GO" id="GO:0070847">
    <property type="term" value="C:core mediator complex"/>
    <property type="evidence" value="ECO:0007669"/>
    <property type="project" value="EnsemblFungi"/>
</dbReference>
<dbReference type="GO" id="GO:0016592">
    <property type="term" value="C:mediator complex"/>
    <property type="evidence" value="ECO:0000318"/>
    <property type="project" value="GO_Central"/>
</dbReference>
<dbReference type="GO" id="GO:0061629">
    <property type="term" value="F:RNA polymerase II-specific DNA-binding transcription factor binding"/>
    <property type="evidence" value="ECO:0007669"/>
    <property type="project" value="EnsemblFungi"/>
</dbReference>
<dbReference type="GO" id="GO:0003713">
    <property type="term" value="F:transcription coactivator activity"/>
    <property type="evidence" value="ECO:0007669"/>
    <property type="project" value="EnsemblFungi"/>
</dbReference>
<dbReference type="GO" id="GO:0003712">
    <property type="term" value="F:transcription coregulator activity"/>
    <property type="evidence" value="ECO:0000318"/>
    <property type="project" value="GO_Central"/>
</dbReference>
<dbReference type="GO" id="GO:0003714">
    <property type="term" value="F:transcription corepressor activity"/>
    <property type="evidence" value="ECO:0007669"/>
    <property type="project" value="EnsemblFungi"/>
</dbReference>
<dbReference type="GO" id="GO:0000122">
    <property type="term" value="P:negative regulation of transcription by RNA polymerase II"/>
    <property type="evidence" value="ECO:0007669"/>
    <property type="project" value="EnsemblFungi"/>
</dbReference>
<dbReference type="GO" id="GO:0032968">
    <property type="term" value="P:positive regulation of transcription elongation by RNA polymerase II"/>
    <property type="evidence" value="ECO:0007669"/>
    <property type="project" value="EnsemblFungi"/>
</dbReference>
<dbReference type="GO" id="GO:0060261">
    <property type="term" value="P:positive regulation of transcription initiation by RNA polymerase II"/>
    <property type="evidence" value="ECO:0007669"/>
    <property type="project" value="EnsemblFungi"/>
</dbReference>
<dbReference type="GO" id="GO:0006357">
    <property type="term" value="P:regulation of transcription by RNA polymerase II"/>
    <property type="evidence" value="ECO:0000318"/>
    <property type="project" value="GO_Central"/>
</dbReference>
<dbReference type="GO" id="GO:0051123">
    <property type="term" value="P:RNA polymerase II preinitiation complex assembly"/>
    <property type="evidence" value="ECO:0007669"/>
    <property type="project" value="EnsemblFungi"/>
</dbReference>
<dbReference type="Gene3D" id="6.10.280.10">
    <property type="entry name" value="Mediator complex, subunit Med21"/>
    <property type="match status" value="1"/>
</dbReference>
<dbReference type="InterPro" id="IPR037212">
    <property type="entry name" value="Med7/Med21-like"/>
</dbReference>
<dbReference type="InterPro" id="IPR021384">
    <property type="entry name" value="Mediator_Med21"/>
</dbReference>
<dbReference type="PANTHER" id="PTHR13381:SF0">
    <property type="entry name" value="MEDIATOR OF RNA POLYMERASE II TRANSCRIPTION SUBUNIT 21"/>
    <property type="match status" value="1"/>
</dbReference>
<dbReference type="PANTHER" id="PTHR13381">
    <property type="entry name" value="RNA POLYMERASE II HOLOENZYME COMPONENT SRB7"/>
    <property type="match status" value="1"/>
</dbReference>
<dbReference type="Pfam" id="PF11221">
    <property type="entry name" value="Med21"/>
    <property type="match status" value="1"/>
</dbReference>
<dbReference type="SUPFAM" id="SSF140718">
    <property type="entry name" value="Mediator hinge subcomplex-like"/>
    <property type="match status" value="1"/>
</dbReference>
<keyword id="KW-0010">Activator</keyword>
<keyword id="KW-0175">Coiled coil</keyword>
<keyword id="KW-0539">Nucleus</keyword>
<keyword id="KW-1185">Reference proteome</keyword>
<keyword id="KW-0804">Transcription</keyword>
<keyword id="KW-0805">Transcription regulation</keyword>
<comment type="function">
    <text evidence="1">Component of the Mediator complex, a coactivator involved in the regulated transcription of nearly all RNA polymerase II-dependent genes. Mediator functions as a bridge to convey information from gene-specific regulatory proteins to the basal RNA polymerase II transcription machinery. Mediator is recruited to promoters by direct interactions with regulatory proteins and serves as a scaffold for the assembly of a functional preinitiation complex with RNA polymerase II and the general transcription factors (By similarity).</text>
</comment>
<comment type="subunit">
    <text evidence="1">Component of the Mediator complex.</text>
</comment>
<comment type="subcellular location">
    <subcellularLocation>
        <location evidence="1">Nucleus</location>
    </subcellularLocation>
</comment>
<comment type="similarity">
    <text evidence="3">Belongs to the Mediator complex subunit 21 family.</text>
</comment>
<protein>
    <recommendedName>
        <fullName>Mediator of RNA polymerase II transcription subunit 21</fullName>
    </recommendedName>
    <alternativeName>
        <fullName>Mediator complex subunit 21</fullName>
    </alternativeName>
</protein>
<proteinExistence type="inferred from homology"/>
<evidence type="ECO:0000250" key="1"/>
<evidence type="ECO:0000255" key="2"/>
<evidence type="ECO:0000305" key="3"/>
<feature type="chain" id="PRO_0000305970" description="Mediator of RNA polymerase II transcription subunit 21">
    <location>
        <begin position="1"/>
        <end position="140"/>
    </location>
</feature>
<feature type="coiled-coil region" evidence="2">
    <location>
        <begin position="52"/>
        <end position="130"/>
    </location>
</feature>
<gene>
    <name type="primary">SRB7</name>
    <name type="synonym">MED21</name>
    <name type="ordered locus">YALI0E15037g</name>
</gene>
<sequence length="140" mass="16150">MADRLTQLQTCVDQMLTQYFSALTHINTNHGFKSLAGEELVKDDTVPVVTDEERERTLEELAKDLVVKSQQIDYLIDSLPGIGSSEEHQMQQIEKLQKELEHYDQVTEDVIKEKDELLEHCDELILKLAQRKAHIDVESM</sequence>
<accession>Q6C5U8</accession>
<reference key="1">
    <citation type="journal article" date="2004" name="Nature">
        <title>Genome evolution in yeasts.</title>
        <authorList>
            <person name="Dujon B."/>
            <person name="Sherman D."/>
            <person name="Fischer G."/>
            <person name="Durrens P."/>
            <person name="Casaregola S."/>
            <person name="Lafontaine I."/>
            <person name="de Montigny J."/>
            <person name="Marck C."/>
            <person name="Neuveglise C."/>
            <person name="Talla E."/>
            <person name="Goffard N."/>
            <person name="Frangeul L."/>
            <person name="Aigle M."/>
            <person name="Anthouard V."/>
            <person name="Babour A."/>
            <person name="Barbe V."/>
            <person name="Barnay S."/>
            <person name="Blanchin S."/>
            <person name="Beckerich J.-M."/>
            <person name="Beyne E."/>
            <person name="Bleykasten C."/>
            <person name="Boisrame A."/>
            <person name="Boyer J."/>
            <person name="Cattolico L."/>
            <person name="Confanioleri F."/>
            <person name="de Daruvar A."/>
            <person name="Despons L."/>
            <person name="Fabre E."/>
            <person name="Fairhead C."/>
            <person name="Ferry-Dumazet H."/>
            <person name="Groppi A."/>
            <person name="Hantraye F."/>
            <person name="Hennequin C."/>
            <person name="Jauniaux N."/>
            <person name="Joyet P."/>
            <person name="Kachouri R."/>
            <person name="Kerrest A."/>
            <person name="Koszul R."/>
            <person name="Lemaire M."/>
            <person name="Lesur I."/>
            <person name="Ma L."/>
            <person name="Muller H."/>
            <person name="Nicaud J.-M."/>
            <person name="Nikolski M."/>
            <person name="Oztas S."/>
            <person name="Ozier-Kalogeropoulos O."/>
            <person name="Pellenz S."/>
            <person name="Potier S."/>
            <person name="Richard G.-F."/>
            <person name="Straub M.-L."/>
            <person name="Suleau A."/>
            <person name="Swennen D."/>
            <person name="Tekaia F."/>
            <person name="Wesolowski-Louvel M."/>
            <person name="Westhof E."/>
            <person name="Wirth B."/>
            <person name="Zeniou-Meyer M."/>
            <person name="Zivanovic Y."/>
            <person name="Bolotin-Fukuhara M."/>
            <person name="Thierry A."/>
            <person name="Bouchier C."/>
            <person name="Caudron B."/>
            <person name="Scarpelli C."/>
            <person name="Gaillardin C."/>
            <person name="Weissenbach J."/>
            <person name="Wincker P."/>
            <person name="Souciet J.-L."/>
        </authorList>
    </citation>
    <scope>NUCLEOTIDE SEQUENCE [LARGE SCALE GENOMIC DNA]</scope>
    <source>
        <strain>CLIB 122 / E 150</strain>
    </source>
</reference>
<organism>
    <name type="scientific">Yarrowia lipolytica (strain CLIB 122 / E 150)</name>
    <name type="common">Yeast</name>
    <name type="synonym">Candida lipolytica</name>
    <dbReference type="NCBI Taxonomy" id="284591"/>
    <lineage>
        <taxon>Eukaryota</taxon>
        <taxon>Fungi</taxon>
        <taxon>Dikarya</taxon>
        <taxon>Ascomycota</taxon>
        <taxon>Saccharomycotina</taxon>
        <taxon>Dipodascomycetes</taxon>
        <taxon>Dipodascales</taxon>
        <taxon>Dipodascales incertae sedis</taxon>
        <taxon>Yarrowia</taxon>
    </lineage>
</organism>
<name>MED21_YARLI</name>